<gene>
    <name type="primary">rpsA</name>
    <name type="ordered locus">MT1666</name>
</gene>
<organism>
    <name type="scientific">Mycobacterium tuberculosis (strain CDC 1551 / Oshkosh)</name>
    <dbReference type="NCBI Taxonomy" id="83331"/>
    <lineage>
        <taxon>Bacteria</taxon>
        <taxon>Bacillati</taxon>
        <taxon>Actinomycetota</taxon>
        <taxon>Actinomycetes</taxon>
        <taxon>Mycobacteriales</taxon>
        <taxon>Mycobacteriaceae</taxon>
        <taxon>Mycobacterium</taxon>
        <taxon>Mycobacterium tuberculosis complex</taxon>
    </lineage>
</organism>
<reference key="1">
    <citation type="journal article" date="2002" name="J. Bacteriol.">
        <title>Whole-genome comparison of Mycobacterium tuberculosis clinical and laboratory strains.</title>
        <authorList>
            <person name="Fleischmann R.D."/>
            <person name="Alland D."/>
            <person name="Eisen J.A."/>
            <person name="Carpenter L."/>
            <person name="White O."/>
            <person name="Peterson J.D."/>
            <person name="DeBoy R.T."/>
            <person name="Dodson R.J."/>
            <person name="Gwinn M.L."/>
            <person name="Haft D.H."/>
            <person name="Hickey E.K."/>
            <person name="Kolonay J.F."/>
            <person name="Nelson W.C."/>
            <person name="Umayam L.A."/>
            <person name="Ermolaeva M.D."/>
            <person name="Salzberg S.L."/>
            <person name="Delcher A."/>
            <person name="Utterback T.R."/>
            <person name="Weidman J.F."/>
            <person name="Khouri H.M."/>
            <person name="Gill J."/>
            <person name="Mikula A."/>
            <person name="Bishai W."/>
            <person name="Jacobs W.R. Jr."/>
            <person name="Venter J.C."/>
            <person name="Fraser C.M."/>
        </authorList>
    </citation>
    <scope>NUCLEOTIDE SEQUENCE [LARGE SCALE GENOMIC DNA]</scope>
    <source>
        <strain>CDC 1551 / Oshkosh</strain>
    </source>
</reference>
<feature type="chain" id="PRO_0000428252" description="Small ribosomal subunit protein bS1">
    <location>
        <begin position="1"/>
        <end position="481"/>
    </location>
</feature>
<feature type="domain" description="S1 motif 1" evidence="2">
    <location>
        <begin position="36"/>
        <end position="105"/>
    </location>
</feature>
<feature type="domain" description="S1 motif 2" evidence="2">
    <location>
        <begin position="123"/>
        <end position="188"/>
    </location>
</feature>
<feature type="domain" description="S1 motif 3" evidence="2">
    <location>
        <begin position="209"/>
        <end position="277"/>
    </location>
</feature>
<feature type="domain" description="S1 motif 4" evidence="2">
    <location>
        <begin position="294"/>
        <end position="363"/>
    </location>
</feature>
<feature type="region of interest" description="Disordered" evidence="3">
    <location>
        <begin position="429"/>
        <end position="467"/>
    </location>
</feature>
<feature type="compositionally biased region" description="Low complexity" evidence="3">
    <location>
        <begin position="437"/>
        <end position="456"/>
    </location>
</feature>
<keyword id="KW-1185">Reference proteome</keyword>
<keyword id="KW-0677">Repeat</keyword>
<keyword id="KW-0687">Ribonucleoprotein</keyword>
<keyword id="KW-0689">Ribosomal protein</keyword>
<keyword id="KW-0694">RNA-binding</keyword>
<proteinExistence type="inferred from homology"/>
<comment type="function">
    <text evidence="1">Binds mRNA; thus facilitating recognition of the initiation point. It is needed to translate mRNA with a short Shine-Dalgarno (SD) purine-rich sequence (By similarity).</text>
</comment>
<comment type="similarity">
    <text evidence="4">Belongs to the bacterial ribosomal protein bS1 family.</text>
</comment>
<sequence>MPSPTVTSPQVAVNDIGSSEDFLAAIDKTIKYFNDGDIVEGTIVKVDRDEVLLDIGYKTEGVIPARELSIKHDVDPNEVVSVGDEVEALVLTKEDKEGRLILSKKRAQYERAWGTIEALKEKDEAVKGTVIEVVKGGLILDIGLRGFLPASLVEMRRVRDLQPYIGKEIEAKIIELDKNRNNVVLSRRAWLEQTQSEVRSEFLNNLQKGTIRKGVVSSIVNFGAFVDLGGVDGLVHVSELSWKHIDHPSEVVQVGDEVTVEVLDVDMDRERVSLSLKATQEDPWRHFARTHAIGQIVPGKVTKLVPFGAFVRVEEGIEGLVHISELAERHVEVPDQVVAVGDDAMVKVIDIDLERRRISLSLKQANEDYTEEFDPAKYGMADSYDEQGNYIFPEGFDAETNEWLEGFEKQRAEWEARYAEAERRHKMHTAQMEKFAAAEAAGRGADDQSSASSAPSEKTAGGSLASDAQLAALREKLAGSA</sequence>
<dbReference type="EMBL" id="AE000516">
    <property type="protein sequence ID" value="AAK45936.1"/>
    <property type="molecule type" value="Genomic_DNA"/>
</dbReference>
<dbReference type="PIR" id="D70559">
    <property type="entry name" value="D70559"/>
</dbReference>
<dbReference type="RefSeq" id="WP_003408066.1">
    <property type="nucleotide sequence ID" value="NZ_KK341227.1"/>
</dbReference>
<dbReference type="SMR" id="P9WH42"/>
<dbReference type="KEGG" id="mtc:MT1666"/>
<dbReference type="PATRIC" id="fig|83331.31.peg.1789"/>
<dbReference type="HOGENOM" id="CLU_015805_4_1_11"/>
<dbReference type="Proteomes" id="UP000001020">
    <property type="component" value="Chromosome"/>
</dbReference>
<dbReference type="GO" id="GO:1990904">
    <property type="term" value="C:ribonucleoprotein complex"/>
    <property type="evidence" value="ECO:0007669"/>
    <property type="project" value="UniProtKB-KW"/>
</dbReference>
<dbReference type="GO" id="GO:0005840">
    <property type="term" value="C:ribosome"/>
    <property type="evidence" value="ECO:0007669"/>
    <property type="project" value="UniProtKB-KW"/>
</dbReference>
<dbReference type="GO" id="GO:0003729">
    <property type="term" value="F:mRNA binding"/>
    <property type="evidence" value="ECO:0007669"/>
    <property type="project" value="TreeGrafter"/>
</dbReference>
<dbReference type="GO" id="GO:0003735">
    <property type="term" value="F:structural constituent of ribosome"/>
    <property type="evidence" value="ECO:0007669"/>
    <property type="project" value="TreeGrafter"/>
</dbReference>
<dbReference type="GO" id="GO:0006412">
    <property type="term" value="P:translation"/>
    <property type="evidence" value="ECO:0007669"/>
    <property type="project" value="TreeGrafter"/>
</dbReference>
<dbReference type="CDD" id="cd05687">
    <property type="entry name" value="S1_RPS1_repeat_ec1_hs1"/>
    <property type="match status" value="1"/>
</dbReference>
<dbReference type="CDD" id="cd04465">
    <property type="entry name" value="S1_RPS1_repeat_ec2_hs2"/>
    <property type="match status" value="1"/>
</dbReference>
<dbReference type="CDD" id="cd05688">
    <property type="entry name" value="S1_RPS1_repeat_ec3"/>
    <property type="match status" value="1"/>
</dbReference>
<dbReference type="FunFam" id="2.40.50.140:FF:000013">
    <property type="entry name" value="30S ribosomal protein S1"/>
    <property type="match status" value="1"/>
</dbReference>
<dbReference type="FunFam" id="2.40.50.140:FF:000031">
    <property type="entry name" value="30S ribosomal protein S1"/>
    <property type="match status" value="1"/>
</dbReference>
<dbReference type="FunFam" id="2.40.50.140:FF:000035">
    <property type="entry name" value="30S ribosomal protein S1"/>
    <property type="match status" value="1"/>
</dbReference>
<dbReference type="FunFam" id="2.40.50.140:FF:000039">
    <property type="entry name" value="30S ribosomal protein S1"/>
    <property type="match status" value="1"/>
</dbReference>
<dbReference type="Gene3D" id="2.40.50.140">
    <property type="entry name" value="Nucleic acid-binding proteins"/>
    <property type="match status" value="4"/>
</dbReference>
<dbReference type="InterPro" id="IPR012340">
    <property type="entry name" value="NA-bd_OB-fold"/>
</dbReference>
<dbReference type="InterPro" id="IPR050437">
    <property type="entry name" value="Ribos_protein_bS1-like"/>
</dbReference>
<dbReference type="InterPro" id="IPR035104">
    <property type="entry name" value="Ribosomal_protein_S1-like"/>
</dbReference>
<dbReference type="InterPro" id="IPR003029">
    <property type="entry name" value="S1_domain"/>
</dbReference>
<dbReference type="NCBIfam" id="NF005208">
    <property type="entry name" value="PRK06676.1"/>
    <property type="match status" value="1"/>
</dbReference>
<dbReference type="NCBIfam" id="NF005911">
    <property type="entry name" value="PRK07899.1"/>
    <property type="match status" value="1"/>
</dbReference>
<dbReference type="PANTHER" id="PTHR10724">
    <property type="entry name" value="30S RIBOSOMAL PROTEIN S1"/>
    <property type="match status" value="1"/>
</dbReference>
<dbReference type="PANTHER" id="PTHR10724:SF7">
    <property type="entry name" value="SMALL RIBOSOMAL SUBUNIT PROTEIN BS1C"/>
    <property type="match status" value="1"/>
</dbReference>
<dbReference type="Pfam" id="PF00575">
    <property type="entry name" value="S1"/>
    <property type="match status" value="4"/>
</dbReference>
<dbReference type="PRINTS" id="PR00681">
    <property type="entry name" value="RIBOSOMALS1"/>
</dbReference>
<dbReference type="SMART" id="SM00316">
    <property type="entry name" value="S1"/>
    <property type="match status" value="4"/>
</dbReference>
<dbReference type="SUPFAM" id="SSF50249">
    <property type="entry name" value="Nucleic acid-binding proteins"/>
    <property type="match status" value="4"/>
</dbReference>
<dbReference type="PROSITE" id="PS50126">
    <property type="entry name" value="S1"/>
    <property type="match status" value="4"/>
</dbReference>
<accession>P9WH42</accession>
<accession>L0TA09</accession>
<accession>O06147</accession>
<evidence type="ECO:0000250" key="1"/>
<evidence type="ECO:0000255" key="2">
    <source>
        <dbReference type="PROSITE-ProRule" id="PRU00180"/>
    </source>
</evidence>
<evidence type="ECO:0000256" key="3">
    <source>
        <dbReference type="SAM" id="MobiDB-lite"/>
    </source>
</evidence>
<evidence type="ECO:0000305" key="4"/>
<name>RS1_MYCTO</name>
<protein>
    <recommendedName>
        <fullName evidence="4">Small ribosomal subunit protein bS1</fullName>
    </recommendedName>
    <alternativeName>
        <fullName>30S ribosomal protein S1</fullName>
    </alternativeName>
</protein>